<dbReference type="EMBL" id="AB017696">
    <property type="protein sequence ID" value="BAA84920.1"/>
    <property type="molecule type" value="mRNA"/>
</dbReference>
<dbReference type="EMBL" id="AF177680">
    <property type="protein sequence ID" value="AAF87055.1"/>
    <property type="molecule type" value="mRNA"/>
</dbReference>
<dbReference type="EMBL" id="AJ000540">
    <property type="protein sequence ID" value="CAA04173.1"/>
    <property type="molecule type" value="mRNA"/>
</dbReference>
<dbReference type="RefSeq" id="NP_112624.1">
    <property type="nucleotide sequence ID" value="NM_031334.1"/>
</dbReference>
<dbReference type="SMR" id="Q9R0T4"/>
<dbReference type="BioGRID" id="249721">
    <property type="interactions" value="3"/>
</dbReference>
<dbReference type="FunCoup" id="Q9R0T4">
    <property type="interactions" value="514"/>
</dbReference>
<dbReference type="STRING" id="10116.ENSRNOP00000027346"/>
<dbReference type="GlyCosmos" id="Q9R0T4">
    <property type="glycosylation" value="11 sites, No reported glycans"/>
</dbReference>
<dbReference type="GlyGen" id="Q9R0T4">
    <property type="glycosylation" value="11 sites"/>
</dbReference>
<dbReference type="PhosphoSitePlus" id="Q9R0T4"/>
<dbReference type="SwissPalm" id="Q9R0T4"/>
<dbReference type="PaxDb" id="10116-ENSRNOP00000027346"/>
<dbReference type="Ensembl" id="ENSRNOT00000027346.3">
    <property type="protein sequence ID" value="ENSRNOP00000027346.1"/>
    <property type="gene ID" value="ENSRNOG00000020151.3"/>
</dbReference>
<dbReference type="GeneID" id="83502"/>
<dbReference type="KEGG" id="rno:83502"/>
<dbReference type="UCSC" id="RGD:69279">
    <property type="organism name" value="rat"/>
</dbReference>
<dbReference type="AGR" id="RGD:69279"/>
<dbReference type="CTD" id="999"/>
<dbReference type="RGD" id="69279">
    <property type="gene designation" value="Cdh1"/>
</dbReference>
<dbReference type="eggNOG" id="KOG3594">
    <property type="taxonomic scope" value="Eukaryota"/>
</dbReference>
<dbReference type="GeneTree" id="ENSGT00940000157175"/>
<dbReference type="HOGENOM" id="CLU_005284_2_1_1"/>
<dbReference type="InParanoid" id="Q9R0T4"/>
<dbReference type="OMA" id="GAVNNCM"/>
<dbReference type="OrthoDB" id="6079678at2759"/>
<dbReference type="PhylomeDB" id="Q9R0T4"/>
<dbReference type="TreeFam" id="TF316817"/>
<dbReference type="Reactome" id="R-RNO-1474228">
    <property type="pathway name" value="Degradation of the extracellular matrix"/>
</dbReference>
<dbReference type="Reactome" id="R-RNO-216083">
    <property type="pathway name" value="Integrin cell surface interactions"/>
</dbReference>
<dbReference type="Reactome" id="R-RNO-351906">
    <property type="pathway name" value="Apoptotic cleavage of cell adhesion proteins"/>
</dbReference>
<dbReference type="Reactome" id="R-RNO-418990">
    <property type="pathway name" value="Adherens junctions interactions"/>
</dbReference>
<dbReference type="PRO" id="PR:Q9R0T4"/>
<dbReference type="Proteomes" id="UP000002494">
    <property type="component" value="Chromosome 19"/>
</dbReference>
<dbReference type="Bgee" id="ENSRNOG00000020151">
    <property type="expression patterns" value="Expressed in stomach and 18 other cell types or tissues"/>
</dbReference>
<dbReference type="GO" id="GO:0015629">
    <property type="term" value="C:actin cytoskeleton"/>
    <property type="evidence" value="ECO:0000266"/>
    <property type="project" value="RGD"/>
</dbReference>
<dbReference type="GO" id="GO:0005912">
    <property type="term" value="C:adherens junction"/>
    <property type="evidence" value="ECO:0000250"/>
    <property type="project" value="UniProtKB"/>
</dbReference>
<dbReference type="GO" id="GO:0043296">
    <property type="term" value="C:apical junction complex"/>
    <property type="evidence" value="ECO:0000266"/>
    <property type="project" value="RGD"/>
</dbReference>
<dbReference type="GO" id="GO:0045177">
    <property type="term" value="C:apical part of cell"/>
    <property type="evidence" value="ECO:0000266"/>
    <property type="project" value="RGD"/>
</dbReference>
<dbReference type="GO" id="GO:0030424">
    <property type="term" value="C:axon"/>
    <property type="evidence" value="ECO:0000266"/>
    <property type="project" value="RGD"/>
</dbReference>
<dbReference type="GO" id="GO:0043679">
    <property type="term" value="C:axon terminus"/>
    <property type="evidence" value="ECO:0000266"/>
    <property type="project" value="RGD"/>
</dbReference>
<dbReference type="GO" id="GO:0016323">
    <property type="term" value="C:basolateral plasma membrane"/>
    <property type="evidence" value="ECO:0000266"/>
    <property type="project" value="RGD"/>
</dbReference>
<dbReference type="GO" id="GO:0016342">
    <property type="term" value="C:catenin complex"/>
    <property type="evidence" value="ECO:0000266"/>
    <property type="project" value="RGD"/>
</dbReference>
<dbReference type="GO" id="GO:0030054">
    <property type="term" value="C:cell junction"/>
    <property type="evidence" value="ECO:0000250"/>
    <property type="project" value="UniProtKB"/>
</dbReference>
<dbReference type="GO" id="GO:0071944">
    <property type="term" value="C:cell periphery"/>
    <property type="evidence" value="ECO:0000266"/>
    <property type="project" value="RGD"/>
</dbReference>
<dbReference type="GO" id="GO:0009986">
    <property type="term" value="C:cell surface"/>
    <property type="evidence" value="ECO:0000266"/>
    <property type="project" value="RGD"/>
</dbReference>
<dbReference type="GO" id="GO:0005911">
    <property type="term" value="C:cell-cell junction"/>
    <property type="evidence" value="ECO:0000250"/>
    <property type="project" value="UniProtKB"/>
</dbReference>
<dbReference type="GO" id="GO:0030864">
    <property type="term" value="C:cortical actin cytoskeleton"/>
    <property type="evidence" value="ECO:0000266"/>
    <property type="project" value="RGD"/>
</dbReference>
<dbReference type="GO" id="GO:0005737">
    <property type="term" value="C:cytoplasm"/>
    <property type="evidence" value="ECO:0000250"/>
    <property type="project" value="UniProtKB"/>
</dbReference>
<dbReference type="GO" id="GO:0009898">
    <property type="term" value="C:cytoplasmic side of plasma membrane"/>
    <property type="evidence" value="ECO:0000266"/>
    <property type="project" value="RGD"/>
</dbReference>
<dbReference type="GO" id="GO:0030057">
    <property type="term" value="C:desmosome"/>
    <property type="evidence" value="ECO:0000266"/>
    <property type="project" value="RGD"/>
</dbReference>
<dbReference type="GO" id="GO:0005768">
    <property type="term" value="C:endosome"/>
    <property type="evidence" value="ECO:0007669"/>
    <property type="project" value="UniProtKB-SubCell"/>
</dbReference>
<dbReference type="GO" id="GO:0016600">
    <property type="term" value="C:flotillin complex"/>
    <property type="evidence" value="ECO:0000266"/>
    <property type="project" value="RGD"/>
</dbReference>
<dbReference type="GO" id="GO:0098978">
    <property type="term" value="C:glutamatergic synapse"/>
    <property type="evidence" value="ECO:0000314"/>
    <property type="project" value="SynGO"/>
</dbReference>
<dbReference type="GO" id="GO:0030027">
    <property type="term" value="C:lamellipodium"/>
    <property type="evidence" value="ECO:0000266"/>
    <property type="project" value="RGD"/>
</dbReference>
<dbReference type="GO" id="GO:0043219">
    <property type="term" value="C:lateral loop"/>
    <property type="evidence" value="ECO:0000266"/>
    <property type="project" value="RGD"/>
</dbReference>
<dbReference type="GO" id="GO:0016328">
    <property type="term" value="C:lateral plasma membrane"/>
    <property type="evidence" value="ECO:0000266"/>
    <property type="project" value="RGD"/>
</dbReference>
<dbReference type="GO" id="GO:0016020">
    <property type="term" value="C:membrane"/>
    <property type="evidence" value="ECO:0000266"/>
    <property type="project" value="RGD"/>
</dbReference>
<dbReference type="GO" id="GO:0005902">
    <property type="term" value="C:microvillus"/>
    <property type="evidence" value="ECO:0000266"/>
    <property type="project" value="RGD"/>
</dbReference>
<dbReference type="GO" id="GO:0033268">
    <property type="term" value="C:node of Ranvier"/>
    <property type="evidence" value="ECO:0000266"/>
    <property type="project" value="RGD"/>
</dbReference>
<dbReference type="GO" id="GO:0048471">
    <property type="term" value="C:perinuclear region of cytoplasm"/>
    <property type="evidence" value="ECO:0000266"/>
    <property type="project" value="RGD"/>
</dbReference>
<dbReference type="GO" id="GO:0005886">
    <property type="term" value="C:plasma membrane"/>
    <property type="evidence" value="ECO:0000266"/>
    <property type="project" value="RGD"/>
</dbReference>
<dbReference type="GO" id="GO:0098794">
    <property type="term" value="C:postsynapse"/>
    <property type="evidence" value="ECO:0000314"/>
    <property type="project" value="SynGO"/>
</dbReference>
<dbReference type="GO" id="GO:0043220">
    <property type="term" value="C:Schmidt-Lanterman incisure"/>
    <property type="evidence" value="ECO:0000266"/>
    <property type="project" value="RGD"/>
</dbReference>
<dbReference type="GO" id="GO:0005802">
    <property type="term" value="C:trans-Golgi network"/>
    <property type="evidence" value="ECO:0000266"/>
    <property type="project" value="RGD"/>
</dbReference>
<dbReference type="GO" id="GO:0045294">
    <property type="term" value="F:alpha-catenin binding"/>
    <property type="evidence" value="ECO:0000266"/>
    <property type="project" value="RGD"/>
</dbReference>
<dbReference type="GO" id="GO:0030506">
    <property type="term" value="F:ankyrin binding"/>
    <property type="evidence" value="ECO:0000266"/>
    <property type="project" value="RGD"/>
</dbReference>
<dbReference type="GO" id="GO:0008013">
    <property type="term" value="F:beta-catenin binding"/>
    <property type="evidence" value="ECO:0000353"/>
    <property type="project" value="RGD"/>
</dbReference>
<dbReference type="GO" id="GO:0045296">
    <property type="term" value="F:cadherin binding"/>
    <property type="evidence" value="ECO:0000318"/>
    <property type="project" value="GO_Central"/>
</dbReference>
<dbReference type="GO" id="GO:0005509">
    <property type="term" value="F:calcium ion binding"/>
    <property type="evidence" value="ECO:0000266"/>
    <property type="project" value="RGD"/>
</dbReference>
<dbReference type="GO" id="GO:0050839">
    <property type="term" value="F:cell adhesion molecule binding"/>
    <property type="evidence" value="ECO:0000266"/>
    <property type="project" value="RGD"/>
</dbReference>
<dbReference type="GO" id="GO:0008092">
    <property type="term" value="F:cytoskeletal protein binding"/>
    <property type="evidence" value="ECO:0000266"/>
    <property type="project" value="RGD"/>
</dbReference>
<dbReference type="GO" id="GO:0045295">
    <property type="term" value="F:gamma-catenin binding"/>
    <property type="evidence" value="ECO:0000266"/>
    <property type="project" value="RGD"/>
</dbReference>
<dbReference type="GO" id="GO:0032794">
    <property type="term" value="F:GTPase activating protein binding"/>
    <property type="evidence" value="ECO:0000266"/>
    <property type="project" value="RGD"/>
</dbReference>
<dbReference type="GO" id="GO:0042802">
    <property type="term" value="F:identical protein binding"/>
    <property type="evidence" value="ECO:0000266"/>
    <property type="project" value="RGD"/>
</dbReference>
<dbReference type="GO" id="GO:0060090">
    <property type="term" value="F:molecular adaptor activity"/>
    <property type="evidence" value="ECO:0000266"/>
    <property type="project" value="RGD"/>
</dbReference>
<dbReference type="GO" id="GO:0019904">
    <property type="term" value="F:protein domain specific binding"/>
    <property type="evidence" value="ECO:0000266"/>
    <property type="project" value="RGD"/>
</dbReference>
<dbReference type="GO" id="GO:0019903">
    <property type="term" value="F:protein phosphatase binding"/>
    <property type="evidence" value="ECO:0000266"/>
    <property type="project" value="RGD"/>
</dbReference>
<dbReference type="GO" id="GO:1990782">
    <property type="term" value="F:protein tyrosine kinase binding"/>
    <property type="evidence" value="ECO:0000353"/>
    <property type="project" value="RGD"/>
</dbReference>
<dbReference type="GO" id="GO:0030036">
    <property type="term" value="P:actin cytoskeleton organization"/>
    <property type="evidence" value="ECO:0000266"/>
    <property type="project" value="RGD"/>
</dbReference>
<dbReference type="GO" id="GO:0034332">
    <property type="term" value="P:adherens junction organization"/>
    <property type="evidence" value="ECO:0000266"/>
    <property type="project" value="RGD"/>
</dbReference>
<dbReference type="GO" id="GO:0070830">
    <property type="term" value="P:bicellular tight junction assembly"/>
    <property type="evidence" value="ECO:0000266"/>
    <property type="project" value="RGD"/>
</dbReference>
<dbReference type="GO" id="GO:0016339">
    <property type="term" value="P:calcium-dependent cell-cell adhesion via plasma membrane cell adhesion molecules"/>
    <property type="evidence" value="ECO:0000266"/>
    <property type="project" value="RGD"/>
</dbReference>
<dbReference type="GO" id="GO:0060070">
    <property type="term" value="P:canonical Wnt signaling pathway"/>
    <property type="evidence" value="ECO:0000266"/>
    <property type="project" value="RGD"/>
</dbReference>
<dbReference type="GO" id="GO:0016477">
    <property type="term" value="P:cell migration"/>
    <property type="evidence" value="ECO:0000318"/>
    <property type="project" value="GO_Central"/>
</dbReference>
<dbReference type="GO" id="GO:0000902">
    <property type="term" value="P:cell morphogenesis"/>
    <property type="evidence" value="ECO:0000318"/>
    <property type="project" value="GO_Central"/>
</dbReference>
<dbReference type="GO" id="GO:0098609">
    <property type="term" value="P:cell-cell adhesion"/>
    <property type="evidence" value="ECO:0000266"/>
    <property type="project" value="RGD"/>
</dbReference>
<dbReference type="GO" id="GO:0044331">
    <property type="term" value="P:cell-cell adhesion mediated by cadherin"/>
    <property type="evidence" value="ECO:0000266"/>
    <property type="project" value="RGD"/>
</dbReference>
<dbReference type="GO" id="GO:0007043">
    <property type="term" value="P:cell-cell junction assembly"/>
    <property type="evidence" value="ECO:0000318"/>
    <property type="project" value="GO_Central"/>
</dbReference>
<dbReference type="GO" id="GO:0071230">
    <property type="term" value="P:cellular response to amino acid stimulus"/>
    <property type="evidence" value="ECO:0000266"/>
    <property type="project" value="RGD"/>
</dbReference>
<dbReference type="GO" id="GO:0071681">
    <property type="term" value="P:cellular response to indole-3-methanol"/>
    <property type="evidence" value="ECO:0000266"/>
    <property type="project" value="RGD"/>
</dbReference>
<dbReference type="GO" id="GO:0071285">
    <property type="term" value="P:cellular response to lithium ion"/>
    <property type="evidence" value="ECO:0000266"/>
    <property type="project" value="RGD"/>
</dbReference>
<dbReference type="GO" id="GO:0090102">
    <property type="term" value="P:cochlea development"/>
    <property type="evidence" value="ECO:0000266"/>
    <property type="project" value="RGD"/>
</dbReference>
<dbReference type="GO" id="GO:0046697">
    <property type="term" value="P:decidualization"/>
    <property type="evidence" value="ECO:0000266"/>
    <property type="project" value="RGD"/>
</dbReference>
<dbReference type="GO" id="GO:0002159">
    <property type="term" value="P:desmosome assembly"/>
    <property type="evidence" value="ECO:0000250"/>
    <property type="project" value="UniProtKB"/>
</dbReference>
<dbReference type="GO" id="GO:0007566">
    <property type="term" value="P:embryo implantation"/>
    <property type="evidence" value="ECO:0000266"/>
    <property type="project" value="RGD"/>
</dbReference>
<dbReference type="GO" id="GO:0003382">
    <property type="term" value="P:epithelial cell morphogenesis"/>
    <property type="evidence" value="ECO:0000266"/>
    <property type="project" value="RGD"/>
</dbReference>
<dbReference type="GO" id="GO:0061436">
    <property type="term" value="P:establishment of skin barrier"/>
    <property type="evidence" value="ECO:0000266"/>
    <property type="project" value="RGD"/>
</dbReference>
<dbReference type="GO" id="GO:0007156">
    <property type="term" value="P:homophilic cell adhesion via plasma membrane adhesion molecules"/>
    <property type="evidence" value="ECO:0007669"/>
    <property type="project" value="InterPro"/>
</dbReference>
<dbReference type="GO" id="GO:0001701">
    <property type="term" value="P:in utero embryonic development"/>
    <property type="evidence" value="ECO:0000266"/>
    <property type="project" value="RGD"/>
</dbReference>
<dbReference type="GO" id="GO:0060576">
    <property type="term" value="P:intestinal epithelial cell development"/>
    <property type="evidence" value="ECO:0000266"/>
    <property type="project" value="RGD"/>
</dbReference>
<dbReference type="GO" id="GO:0030517">
    <property type="term" value="P:negative regulation of axon extension"/>
    <property type="evidence" value="ECO:0000315"/>
    <property type="project" value="RGD"/>
</dbReference>
<dbReference type="GO" id="GO:0090090">
    <property type="term" value="P:negative regulation of canonical Wnt signaling pathway"/>
    <property type="evidence" value="ECO:0000266"/>
    <property type="project" value="RGD"/>
</dbReference>
<dbReference type="GO" id="GO:0030336">
    <property type="term" value="P:negative regulation of cell migration"/>
    <property type="evidence" value="ECO:0000266"/>
    <property type="project" value="RGD"/>
</dbReference>
<dbReference type="GO" id="GO:0022408">
    <property type="term" value="P:negative regulation of cell-cell adhesion"/>
    <property type="evidence" value="ECO:0000266"/>
    <property type="project" value="RGD"/>
</dbReference>
<dbReference type="GO" id="GO:0050680">
    <property type="term" value="P:negative regulation of epithelial cell proliferation"/>
    <property type="evidence" value="ECO:0000266"/>
    <property type="project" value="RGD"/>
</dbReference>
<dbReference type="GO" id="GO:1903077">
    <property type="term" value="P:negative regulation of protein localization to plasma membrane"/>
    <property type="evidence" value="ECO:0000266"/>
    <property type="project" value="RGD"/>
</dbReference>
<dbReference type="GO" id="GO:0010955">
    <property type="term" value="P:negative regulation of protein processing"/>
    <property type="evidence" value="ECO:0000266"/>
    <property type="project" value="RGD"/>
</dbReference>
<dbReference type="GO" id="GO:0031175">
    <property type="term" value="P:neuron projection development"/>
    <property type="evidence" value="ECO:0000270"/>
    <property type="project" value="RGD"/>
</dbReference>
<dbReference type="GO" id="GO:0021983">
    <property type="term" value="P:pituitary gland development"/>
    <property type="evidence" value="ECO:0000270"/>
    <property type="project" value="RGD"/>
</dbReference>
<dbReference type="GO" id="GO:0022409">
    <property type="term" value="P:positive regulation of cell-cell adhesion"/>
    <property type="evidence" value="ECO:0000266"/>
    <property type="project" value="RGD"/>
</dbReference>
<dbReference type="GO" id="GO:0045893">
    <property type="term" value="P:positive regulation of DNA-templated transcription"/>
    <property type="evidence" value="ECO:0000266"/>
    <property type="project" value="RGD"/>
</dbReference>
<dbReference type="GO" id="GO:0042307">
    <property type="term" value="P:positive regulation of protein import into nucleus"/>
    <property type="evidence" value="ECO:0000266"/>
    <property type="project" value="RGD"/>
</dbReference>
<dbReference type="GO" id="GO:1903829">
    <property type="term" value="P:positive regulation of protein localization"/>
    <property type="evidence" value="ECO:0000250"/>
    <property type="project" value="UniProtKB"/>
</dbReference>
<dbReference type="GO" id="GO:0072659">
    <property type="term" value="P:protein localization to plasma membrane"/>
    <property type="evidence" value="ECO:0000266"/>
    <property type="project" value="RGD"/>
</dbReference>
<dbReference type="GO" id="GO:0060693">
    <property type="term" value="P:regulation of branching involved in salivary gland morphogenesis"/>
    <property type="evidence" value="ECO:0000266"/>
    <property type="project" value="RGD"/>
</dbReference>
<dbReference type="GO" id="GO:0010468">
    <property type="term" value="P:regulation of gene expression"/>
    <property type="evidence" value="ECO:0000250"/>
    <property type="project" value="UniProtKB"/>
</dbReference>
<dbReference type="GO" id="GO:2001222">
    <property type="term" value="P:regulation of neuron migration"/>
    <property type="evidence" value="ECO:0000266"/>
    <property type="project" value="RGD"/>
</dbReference>
<dbReference type="GO" id="GO:0099576">
    <property type="term" value="P:regulation of protein catabolic process at postsynapse, modulating synaptic transmission"/>
    <property type="evidence" value="ECO:0000314"/>
    <property type="project" value="SynGO"/>
</dbReference>
<dbReference type="GO" id="GO:0032880">
    <property type="term" value="P:regulation of protein localization"/>
    <property type="evidence" value="ECO:0000266"/>
    <property type="project" value="RGD"/>
</dbReference>
<dbReference type="GO" id="GO:2000008">
    <property type="term" value="P:regulation of protein localization to cell surface"/>
    <property type="evidence" value="ECO:0000266"/>
    <property type="project" value="RGD"/>
</dbReference>
<dbReference type="GO" id="GO:0140459">
    <property type="term" value="P:response to Gram-positive bacterium"/>
    <property type="evidence" value="ECO:0000270"/>
    <property type="project" value="RGD"/>
</dbReference>
<dbReference type="GO" id="GO:0071503">
    <property type="term" value="P:response to heparin"/>
    <property type="evidence" value="ECO:0000270"/>
    <property type="project" value="RGD"/>
</dbReference>
<dbReference type="GO" id="GO:0009636">
    <property type="term" value="P:response to toxic substance"/>
    <property type="evidence" value="ECO:0000270"/>
    <property type="project" value="RGD"/>
</dbReference>
<dbReference type="GO" id="GO:0009410">
    <property type="term" value="P:response to xenobiotic stimulus"/>
    <property type="evidence" value="ECO:0000270"/>
    <property type="project" value="RGD"/>
</dbReference>
<dbReference type="GO" id="GO:0060662">
    <property type="term" value="P:salivary gland cavitation"/>
    <property type="evidence" value="ECO:0000266"/>
    <property type="project" value="RGD"/>
</dbReference>
<dbReference type="GO" id="GO:0007605">
    <property type="term" value="P:sensory perception of sound"/>
    <property type="evidence" value="ECO:0000266"/>
    <property type="project" value="RGD"/>
</dbReference>
<dbReference type="GO" id="GO:0007416">
    <property type="term" value="P:synapse assembly"/>
    <property type="evidence" value="ECO:0000315"/>
    <property type="project" value="RGD"/>
</dbReference>
<dbReference type="GO" id="GO:0001829">
    <property type="term" value="P:trophectodermal cell differentiation"/>
    <property type="evidence" value="ECO:0000266"/>
    <property type="project" value="RGD"/>
</dbReference>
<dbReference type="GO" id="GO:0035847">
    <property type="term" value="P:uterine epithelium development"/>
    <property type="evidence" value="ECO:0000266"/>
    <property type="project" value="RGD"/>
</dbReference>
<dbReference type="CDD" id="cd00031">
    <property type="entry name" value="CA_like"/>
    <property type="match status" value="1"/>
</dbReference>
<dbReference type="CDD" id="cd11304">
    <property type="entry name" value="Cadherin_repeat"/>
    <property type="match status" value="3"/>
</dbReference>
<dbReference type="FunFam" id="2.60.40.60:FF:000011">
    <property type="entry name" value="Cadherin 1"/>
    <property type="match status" value="1"/>
</dbReference>
<dbReference type="FunFam" id="2.60.40.60:FF:000191">
    <property type="entry name" value="Cadherin 1"/>
    <property type="match status" value="1"/>
</dbReference>
<dbReference type="FunFam" id="2.60.40.60:FF:000019">
    <property type="entry name" value="Cadherin 2"/>
    <property type="match status" value="1"/>
</dbReference>
<dbReference type="FunFam" id="2.60.40.60:FF:000022">
    <property type="entry name" value="Cadherin 2"/>
    <property type="match status" value="1"/>
</dbReference>
<dbReference type="FunFam" id="2.60.40.60:FF:000027">
    <property type="entry name" value="Cadherin 2"/>
    <property type="match status" value="1"/>
</dbReference>
<dbReference type="FunFam" id="4.10.900.10:FF:000001">
    <property type="entry name" value="Cadherin 2"/>
    <property type="match status" value="1"/>
</dbReference>
<dbReference type="FunFam" id="2.60.40.60:FF:000031">
    <property type="entry name" value="Cadherin 3"/>
    <property type="match status" value="1"/>
</dbReference>
<dbReference type="Gene3D" id="2.60.40.60">
    <property type="entry name" value="Cadherins"/>
    <property type="match status" value="6"/>
</dbReference>
<dbReference type="Gene3D" id="4.10.900.10">
    <property type="entry name" value="TCF3-CBD (Catenin binding domain)"/>
    <property type="match status" value="1"/>
</dbReference>
<dbReference type="InterPro" id="IPR039808">
    <property type="entry name" value="Cadherin"/>
</dbReference>
<dbReference type="InterPro" id="IPR002126">
    <property type="entry name" value="Cadherin-like_dom"/>
</dbReference>
<dbReference type="InterPro" id="IPR015919">
    <property type="entry name" value="Cadherin-like_sf"/>
</dbReference>
<dbReference type="InterPro" id="IPR020894">
    <property type="entry name" value="Cadherin_CS"/>
</dbReference>
<dbReference type="InterPro" id="IPR014868">
    <property type="entry name" value="Cadherin_pro_dom"/>
</dbReference>
<dbReference type="InterPro" id="IPR000233">
    <property type="entry name" value="Cadherin_Y-type_LIR"/>
</dbReference>
<dbReference type="InterPro" id="IPR027397">
    <property type="entry name" value="Catenin-bd_sf"/>
</dbReference>
<dbReference type="PANTHER" id="PTHR24027:SF319">
    <property type="entry name" value="CADHERIN-1"/>
    <property type="match status" value="1"/>
</dbReference>
<dbReference type="PANTHER" id="PTHR24027">
    <property type="entry name" value="CADHERIN-23"/>
    <property type="match status" value="1"/>
</dbReference>
<dbReference type="Pfam" id="PF01049">
    <property type="entry name" value="CADH_Y-type_LIR"/>
    <property type="match status" value="1"/>
</dbReference>
<dbReference type="Pfam" id="PF00028">
    <property type="entry name" value="Cadherin"/>
    <property type="match status" value="5"/>
</dbReference>
<dbReference type="Pfam" id="PF08758">
    <property type="entry name" value="Cadherin_pro"/>
    <property type="match status" value="1"/>
</dbReference>
<dbReference type="PRINTS" id="PR00205">
    <property type="entry name" value="CADHERIN"/>
</dbReference>
<dbReference type="SMART" id="SM00112">
    <property type="entry name" value="CA"/>
    <property type="match status" value="4"/>
</dbReference>
<dbReference type="SMART" id="SM01055">
    <property type="entry name" value="Cadherin_pro"/>
    <property type="match status" value="1"/>
</dbReference>
<dbReference type="SUPFAM" id="SSF49313">
    <property type="entry name" value="Cadherin-like"/>
    <property type="match status" value="6"/>
</dbReference>
<dbReference type="PROSITE" id="PS00232">
    <property type="entry name" value="CADHERIN_1"/>
    <property type="match status" value="3"/>
</dbReference>
<dbReference type="PROSITE" id="PS50268">
    <property type="entry name" value="CADHERIN_2"/>
    <property type="match status" value="5"/>
</dbReference>
<sequence>MGARCRSFSALLLLLQVSSWLCQQPESESDSCRPGFSSEVYTFLVPERHLERGHILGRVKFEGCTGRPRTAFFSEDSRFKVSTDGVITVKRHLKLHKLETSFLVHAWDSSYRKLSTKVTLKSLGHHHHRHHHRDPVSESNPELLTFPSFHQGLRRQKRDWVIPPINCPENQKGEFPQRLVQIKSNRDKETTVFYSITGPGADKPPVGVFIIERETGWLKVTQPLDREAIDKYLLYSHAVSSNGEAVEDPMEIVVTVTDQNDNRPEFIQEVFEGSVAEGALPGTSVMQVSATDADDDINTYNAAIAYTILSQDPELPHKNMFTVNRDTGVISVVTSGLDRESYPTYTLVVQAADLQGEGLSTTAKAVITVKDINDNAPIFNPSTYQGQVLENEVGARIATLKVTDDDAPNTPAWNAVYTVVNDPDHQFTVITDPKTNEGILKTAKGLDFEAKQQYILHVTVENEEPFEGSLVPSTATVTVDVVDVNEAPIFVPAEKRVEVPEDFGVGLEIASYTAREPDTFMEQKITYRIWRDTANWLEINPETGVISTRAEMDREDSEHVKNSTYTALIIATDDGSPIATGTGTLLLVLSDVNDNAPIPEPRNMQFCQRNPKPHVITILDPDLPPNTSPFTAELTHGASVNWTIEYNDAEQESLILQPRKDLEIGEYKINLKLSDNQNKDQVTTLEVHVCDCEGTVNNCMKAISLEAGLQVPAILGILGGILALLILILLLLLFLRRRTVVKEPLLPPDDDTRDNVYYYDEEGGGEEDQDFDLSQLHRGLDARPEVIRNDVAPTLMSMPQYRPRPANPDEIGNFIDENLKAADSDPTAPPYDSLLVFDYEGSGSEAASLSSLNSSESDQDQDYDYLNEWGNRFKKLADMYGGGEED</sequence>
<proteinExistence type="evidence at protein level"/>
<keyword id="KW-0106">Calcium</keyword>
<keyword id="KW-0130">Cell adhesion</keyword>
<keyword id="KW-0965">Cell junction</keyword>
<keyword id="KW-1003">Cell membrane</keyword>
<keyword id="KW-0165">Cleavage on pair of basic residues</keyword>
<keyword id="KW-0963">Cytoplasm</keyword>
<keyword id="KW-1015">Disulfide bond</keyword>
<keyword id="KW-0967">Endosome</keyword>
<keyword id="KW-0325">Glycoprotein</keyword>
<keyword id="KW-0333">Golgi apparatus</keyword>
<keyword id="KW-0472">Membrane</keyword>
<keyword id="KW-0479">Metal-binding</keyword>
<keyword id="KW-0597">Phosphoprotein</keyword>
<keyword id="KW-1185">Reference proteome</keyword>
<keyword id="KW-0677">Repeat</keyword>
<keyword id="KW-0732">Signal</keyword>
<keyword id="KW-0812">Transmembrane</keyword>
<keyword id="KW-1133">Transmembrane helix</keyword>
<keyword id="KW-0832">Ubl conjugation</keyword>
<evidence type="ECO:0000250" key="1"/>
<evidence type="ECO:0000250" key="2">
    <source>
        <dbReference type="UniProtKB" id="F1PAA9"/>
    </source>
</evidence>
<evidence type="ECO:0000250" key="3">
    <source>
        <dbReference type="UniProtKB" id="P09803"/>
    </source>
</evidence>
<evidence type="ECO:0000250" key="4">
    <source>
        <dbReference type="UniProtKB" id="P12830"/>
    </source>
</evidence>
<evidence type="ECO:0000255" key="5"/>
<evidence type="ECO:0000255" key="6">
    <source>
        <dbReference type="PROSITE-ProRule" id="PRU00043"/>
    </source>
</evidence>
<evidence type="ECO:0000256" key="7">
    <source>
        <dbReference type="SAM" id="MobiDB-lite"/>
    </source>
</evidence>
<evidence type="ECO:0000269" key="8">
    <source>
    </source>
</evidence>
<reference key="1">
    <citation type="submission" date="1998-09" db="EMBL/GenBank/DDBJ databases">
        <authorList>
            <person name="Asai K."/>
            <person name="Tada T."/>
            <person name="Yamamoto M."/>
            <person name="Obayashi M."/>
            <person name="Mizuno M."/>
            <person name="Toda A."/>
            <person name="Eimoto T."/>
            <person name="Kato T."/>
        </authorList>
    </citation>
    <scope>NUCLEOTIDE SEQUENCE [MRNA]</scope>
    <source>
        <strain>Sprague-Dawley</strain>
        <tissue>Jejunum</tissue>
    </source>
</reference>
<reference key="2">
    <citation type="journal article" date="2000" name="Endocrinology">
        <title>Multiple cadherin superfamily members with unique expression profiles are produced in rat testis.</title>
        <authorList>
            <person name="Johnson K.J."/>
            <person name="Patel S.R."/>
            <person name="Boekelheide K."/>
        </authorList>
    </citation>
    <scope>NUCLEOTIDE SEQUENCE [MRNA] OF 769-872</scope>
    <source>
        <strain>Fischer 344</strain>
        <tissue>Testis</tissue>
    </source>
</reference>
<reference key="3">
    <citation type="thesis" date="1997" institute="University of Technology / Sydney" country="Australia">
        <authorList>
            <person name="Gibbons K.L."/>
        </authorList>
    </citation>
    <scope>NUCLEOTIDE SEQUENCE [MRNA] OF 779-846</scope>
    <source>
        <tissue>Mammary tumor</tissue>
    </source>
</reference>
<reference key="4">
    <citation type="journal article" date="2003" name="Endocrinology">
        <title>Rab8B GTPase and junction dynamics in the testis.</title>
        <authorList>
            <person name="Lau A.S."/>
            <person name="Mruk D.D."/>
        </authorList>
    </citation>
    <scope>INTERACTION WITH RAB8B</scope>
</reference>
<comment type="function">
    <text evidence="2 4">Cadherins are calcium-dependent cell adhesion proteins. They preferentially interact with themselves in a homophilic manner in connecting cells; cadherins may thus contribute to the sorting of heterogeneous cell types. CDH1 is involved in mechanisms regulating cell-cell adhesions, mobility and proliferation of epithelial cells. Promotes organization of radial actin fiber structure and cellular response to contractile forces, via its interaction with AMOTL2 which facilitates anchoring of radial actin fibers to CDH1 junction complexes at the cell membrane (By similarity). Plays a role in the early stages of desmosome cell-cell junction formation via facilitating the recruitment of DSG2 and DSP to desmosome plaques (By similarity). Has a potent invasive suppressor role. It is a ligand for integrin alpha-E/beta-7.</text>
</comment>
<comment type="function">
    <text evidence="4">E-Cad/CTF2 promotes non-amyloidogenic degradation of Abeta precursors. Has a strong inhibitory effect on APP C99 and C83 production (By similarity).</text>
</comment>
<comment type="subunit">
    <text evidence="2 3 4 8">Homodimer; disulfide-linked (By similarity). Component of an E-cadherin/ catenin adhesion complex composed of at least E-cadherin/CDH1, beta-catenin/CTNNB1 or gamma-catenin/JUP, and potentially alpha-catenin/CTNNA1; the complex is located to adherens junctions (By similarity). Found in a complex composed of CDH1, RAP1A and PKP3; PKP3 acts as a scaffold protein within the complex, the complex is required for CDH1 localization to mature desmosome cell junctions (By similarity). Interacts with the TRPV4 and CTNNB1 complex (By similarity). Interacts with CTNND1 (By similarity). The stable association of CTNNA1 is controversial as CTNNA1 was shown not to bind to F-actin when assembled in the complex (By similarity). Alternatively, the CTNNA1-containing complex may be linked to F-actin by other proteins such as LIMA1 (By similarity). Interaction with PSEN1, cleaves CDH1 resulting in the disassociation of cadherin-based adherens junctions (CAJs) (By similarity). Interacts with AJAP1 and DLGAP5 (By similarity). Interacts with TBC1D2 (By similarity). Interacts with LIMA1 (By similarity). Interacts with CAV1 (By similarity). Interacts with PIP5K1C (By similarity). Interacts with DDR1; this stabilizes CDH1 at the cell surface and inhibits its internalization (By similarity). Interacts with RAPGEF2 (By similarity). Interacts with RAB8B (PubMed:12639940). Interacts with KLRG1 (By similarity). Forms a ternary complex composed of ADAM10, CADH1 and EPHA4; within the complex, CADH1 is cleaved by ADAM10 which disrupts adherens junctions (By similarity). Interacts with SPEF1 (By similarity). Interacts with CTNNB1 and PKP2 (By similarity). Interacts with AMOTL2; the interaction may facilitate binding of radial actin fibers to cell junction complexes (By similarity). Interacts with DSG3; the interaction is required for CDH1 localization to developing adherens junctions (By similarity).</text>
</comment>
<comment type="subcellular location">
    <subcellularLocation>
        <location evidence="4">Cell junction</location>
        <location evidence="4">Adherens junction</location>
    </subcellularLocation>
    <subcellularLocation>
        <location evidence="4">Cell membrane</location>
        <topology>Single-pass type I membrane protein</topology>
    </subcellularLocation>
    <subcellularLocation>
        <location evidence="4">Endosome</location>
    </subcellularLocation>
    <subcellularLocation>
        <location evidence="4">Golgi apparatus</location>
        <location evidence="4">trans-Golgi network</location>
    </subcellularLocation>
    <subcellularLocation>
        <location evidence="3">Cytoplasm</location>
    </subcellularLocation>
    <subcellularLocation>
        <location evidence="4">Cell junction</location>
        <location evidence="4">Desmosome</location>
    </subcellularLocation>
    <text evidence="1 3 4">Colocalizes with DLGAP5 at sites of cell-cell contact in intestinal epithelial cells. Anchored to actin microfilaments through association with alpha-, beta- and gamma-catenin. Sequential proteolysis induced by apoptosis or calcium influx, results in translocation from sites of cell-cell contact to the cytoplasm. Colocalizes with RAB11A endosomes during its transport from the Golgi apparatus to the plasma membrane (By similarity). Recruited to desmosomes at the initial assembly phase and also accumulates progressively at mature desmosome cell-cell junctions (By similarity). Localizes to cell-cell contacts as keratinocyte differentiation progresses (By similarity).</text>
</comment>
<comment type="domain">
    <text evidence="4">Three calcium ions are usually bound at the interface of each cadherin domain and strengthen the connections, imparting a strong curvature to the full-length ectodomain.</text>
</comment>
<comment type="PTM">
    <text evidence="3 4">During apoptosis or with calcium influx, cleaved by a membrane-bound metalloproteinase (ADAM10), PS1/gamma-secretase and caspase-3 (By similarity). Processing by the metalloproteinase, induced by calcium influx, causes disruption of cell-cell adhesion and the subsequent release of beta-catenin into the cytoplasm (By similarity). The residual membrane-tethered cleavage product is rapidly degraded via an intracellular proteolytic pathway (By similarity). Cleavage by caspase-3 releases the cytoplasmic tail resulting in disintegration of the actin microfilament system (By similarity). The gamma-secretase-mediated cleavage promotes disassembly of adherens junctions (By similarity). During development of the cochlear organ of Corti, cleavage by ADAM10 at adherens junctions promotes pillar cell separation (By similarity).</text>
</comment>
<comment type="PTM">
    <text evidence="1 4">N-glycosylation at Asn-641 is essential for expression, folding and trafficking. Addition of bisecting N-acetylglucosamine by MGAT3 modulates its cell membrane location (By similarity).</text>
</comment>
<comment type="PTM">
    <text evidence="1">Ubiquitinated by a SCF complex containing SKP2, which requires prior phosphorylation by CK1/CSNK1A1. Ubiquitinated by CBLL1/HAKAI, requires prior phosphorylation at Tyr-758 (By similarity).</text>
</comment>
<comment type="PTM">
    <text evidence="3">O-glycosylated. O-manosylated by TMTC1, TMTC2, TMTC3 or TMTC4. Ser-289 and Thr-513 are O-manosylated by TMTC2 or TMTC4 but not TMTC1 or TMTC3.</text>
</comment>
<name>CADH1_RAT</name>
<organism>
    <name type="scientific">Rattus norvegicus</name>
    <name type="common">Rat</name>
    <dbReference type="NCBI Taxonomy" id="10116"/>
    <lineage>
        <taxon>Eukaryota</taxon>
        <taxon>Metazoa</taxon>
        <taxon>Chordata</taxon>
        <taxon>Craniata</taxon>
        <taxon>Vertebrata</taxon>
        <taxon>Euteleostomi</taxon>
        <taxon>Mammalia</taxon>
        <taxon>Eutheria</taxon>
        <taxon>Euarchontoglires</taxon>
        <taxon>Glires</taxon>
        <taxon>Rodentia</taxon>
        <taxon>Myomorpha</taxon>
        <taxon>Muroidea</taxon>
        <taxon>Muridae</taxon>
        <taxon>Murinae</taxon>
        <taxon>Rattus</taxon>
    </lineage>
</organism>
<gene>
    <name type="primary">Cdh1</name>
</gene>
<feature type="signal peptide" evidence="5">
    <location>
        <begin position="1"/>
        <end position="23"/>
    </location>
</feature>
<feature type="propeptide" id="PRO_0000003719" evidence="5">
    <location>
        <begin position="24"/>
        <end position="158"/>
    </location>
</feature>
<feature type="chain" id="PRO_0000003720" description="Cadherin-1">
    <location>
        <begin position="159"/>
        <end position="886"/>
    </location>
</feature>
<feature type="chain" id="PRO_0000236073" description="E-Cad/CTF1" evidence="5">
    <location>
        <begin position="705"/>
        <end position="886"/>
    </location>
</feature>
<feature type="chain" id="PRO_0000236074" description="E-Cad/CTF2" evidence="5">
    <location>
        <begin position="736"/>
        <end position="886"/>
    </location>
</feature>
<feature type="chain" id="PRO_0000236075" description="E-Cad/CTF3" evidence="5">
    <location>
        <begin position="755"/>
        <end position="886"/>
    </location>
</feature>
<feature type="topological domain" description="Extracellular" evidence="5">
    <location>
        <begin position="24"/>
        <end position="713"/>
    </location>
</feature>
<feature type="transmembrane region" description="Helical" evidence="5">
    <location>
        <begin position="714"/>
        <end position="734"/>
    </location>
</feature>
<feature type="topological domain" description="Cytoplasmic" evidence="5">
    <location>
        <begin position="735"/>
        <end position="886"/>
    </location>
</feature>
<feature type="domain" description="Cadherin 1" evidence="6">
    <location>
        <begin position="159"/>
        <end position="266"/>
    </location>
</feature>
<feature type="domain" description="Cadherin 2" evidence="6">
    <location>
        <begin position="267"/>
        <end position="379"/>
    </location>
</feature>
<feature type="domain" description="Cadherin 3" evidence="6">
    <location>
        <begin position="380"/>
        <end position="490"/>
    </location>
</feature>
<feature type="domain" description="Cadherin 4" evidence="6">
    <location>
        <begin position="491"/>
        <end position="597"/>
    </location>
</feature>
<feature type="domain" description="Cadherin 5" evidence="6">
    <location>
        <begin position="598"/>
        <end position="701"/>
    </location>
</feature>
<feature type="region of interest" description="Disordered" evidence="7">
    <location>
        <begin position="751"/>
        <end position="771"/>
    </location>
</feature>
<feature type="region of interest" description="Required for binding CTNND1 and PSEN1" evidence="1">
    <location>
        <begin position="762"/>
        <end position="773"/>
    </location>
</feature>
<feature type="region of interest" description="Required for binding alpha, beta and" evidence="1">
    <location>
        <begin position="815"/>
        <end position="886"/>
    </location>
</feature>
<feature type="compositionally biased region" description="Acidic residues" evidence="7">
    <location>
        <begin position="759"/>
        <end position="771"/>
    </location>
</feature>
<feature type="binding site" evidence="1">
    <location>
        <position position="261"/>
    </location>
    <ligand>
        <name>Ca(2+)</name>
        <dbReference type="ChEBI" id="CHEBI:29108"/>
        <label>1</label>
    </ligand>
</feature>
<feature type="binding site" evidence="1">
    <location>
        <position position="261"/>
    </location>
    <ligand>
        <name>Ca(2+)</name>
        <dbReference type="ChEBI" id="CHEBI:29108"/>
        <label>2</label>
    </ligand>
</feature>
<feature type="binding site" evidence="1">
    <location>
        <position position="292"/>
    </location>
    <ligand>
        <name>Ca(2+)</name>
        <dbReference type="ChEBI" id="CHEBI:29108"/>
        <label>3</label>
    </ligand>
</feature>
<feature type="site" description="Cleavage; by a metalloproteinase" evidence="1">
    <location>
        <begin position="704"/>
        <end position="705"/>
    </location>
</feature>
<feature type="site" description="Cleavage; by gamma-secretase/PS1" evidence="1">
    <location>
        <begin position="735"/>
        <end position="736"/>
    </location>
</feature>
<feature type="site" description="Cleavage; by caspase-3" evidence="1">
    <location>
        <begin position="754"/>
        <end position="755"/>
    </location>
</feature>
<feature type="modified residue" description="Phosphotyrosine; by SRC" evidence="4">
    <location>
        <position position="757"/>
    </location>
</feature>
<feature type="modified residue" description="Phosphotyrosine; by SRC" evidence="4">
    <location>
        <position position="758"/>
    </location>
</feature>
<feature type="modified residue" description="Phosphotyrosine; by SRC" evidence="4">
    <location>
        <position position="759"/>
    </location>
</feature>
<feature type="modified residue" description="Phosphoserine" evidence="4">
    <location>
        <position position="774"/>
    </location>
</feature>
<feature type="modified residue" description="Phosphoserine" evidence="4">
    <location>
        <position position="797"/>
    </location>
</feature>
<feature type="modified residue" description="Phosphoserine" evidence="3">
    <location>
        <position position="842"/>
    </location>
</feature>
<feature type="modified residue" description="Phosphoserine" evidence="3">
    <location>
        <position position="844"/>
    </location>
</feature>
<feature type="modified residue" description="Phosphoserine" evidence="3">
    <location>
        <position position="850"/>
    </location>
</feature>
<feature type="glycosylation site" description="O-linked (Man...) serine" evidence="3">
    <location>
        <position position="284"/>
    </location>
</feature>
<feature type="glycosylation site" description="O-linked (Man...) serine" evidence="3">
    <location>
        <position position="289"/>
    </location>
</feature>
<feature type="glycosylation site" description="O-linked (Man...) threonine" evidence="3">
    <location>
        <position position="362"/>
    </location>
</feature>
<feature type="glycosylation site" description="O-linked (Man...) threonine" evidence="3">
    <location>
        <position position="474"/>
    </location>
</feature>
<feature type="glycosylation site" description="O-linked (Man...) threonine" evidence="3">
    <location>
        <position position="476"/>
    </location>
</feature>
<feature type="glycosylation site" description="O-linked (Man...) threonine" evidence="3">
    <location>
        <position position="513"/>
    </location>
</feature>
<feature type="glycosylation site" description="N-linked (GlcNAc...) asparagine" evidence="5">
    <location>
        <position position="562"/>
    </location>
</feature>
<feature type="glycosylation site" description="O-linked (Man...) threonine" evidence="3">
    <location>
        <position position="580"/>
    </location>
</feature>
<feature type="glycosylation site" description="O-linked (Man...) threonine" evidence="3">
    <location>
        <position position="582"/>
    </location>
</feature>
<feature type="glycosylation site" description="O-linked (Man...) threonine" evidence="3">
    <location>
        <position position="584"/>
    </location>
</feature>
<feature type="glycosylation site" description="N-linked (GlcNAc...) asparagine" evidence="5">
    <location>
        <position position="641"/>
    </location>
</feature>
<accession>Q9R0T4</accession>
<accession>O35794</accession>
<accession>Q9JIV9</accession>
<protein>
    <recommendedName>
        <fullName>Cadherin-1</fullName>
    </recommendedName>
    <alternativeName>
        <fullName>Epithelial cadherin</fullName>
        <shortName>E-cadherin</shortName>
    </alternativeName>
    <alternativeName>
        <fullName>Uvomorulin</fullName>
    </alternativeName>
    <cdAntigenName>CD324</cdAntigenName>
    <component>
        <recommendedName>
            <fullName>E-Cad/CTF1</fullName>
        </recommendedName>
    </component>
    <component>
        <recommendedName>
            <fullName>E-Cad/CTF2</fullName>
        </recommendedName>
    </component>
    <component>
        <recommendedName>
            <fullName>E-Cad/CTF3</fullName>
        </recommendedName>
    </component>
</protein>